<accession>Q9GYW4</accession>
<protein>
    <recommendedName>
        <fullName evidence="10">Thioester-containing protein 1 allele S1</fullName>
        <shortName evidence="1">TEP1s</shortName>
    </recommendedName>
    <alternativeName>
        <fullName evidence="1">TEP1-F</fullName>
    </alternativeName>
    <alternativeName>
        <fullName evidence="9">Thioester-containing protein I</fullName>
    </alternativeName>
    <component>
        <recommendedName>
            <fullName evidence="1">Thioester-containing protein 1 N-terminal</fullName>
            <shortName evidence="1">TEP1-N</shortName>
        </recommendedName>
    </component>
    <component>
        <recommendedName>
            <fullName evidence="1">Thioester-containing protein 1 C-terminal</fullName>
            <shortName evidence="1">TEP1-C</shortName>
        </recommendedName>
    </component>
</protein>
<name>TEPS1_ANOGA</name>
<evidence type="ECO:0000250" key="1">
    <source>
        <dbReference type="UniProtKB" id="C9XI63"/>
    </source>
</evidence>
<evidence type="ECO:0000250" key="2">
    <source>
        <dbReference type="UniProtKB" id="C9XI66"/>
    </source>
</evidence>
<evidence type="ECO:0000255" key="3"/>
<evidence type="ECO:0000255" key="4">
    <source>
        <dbReference type="PROSITE-ProRule" id="PRU00498"/>
    </source>
</evidence>
<evidence type="ECO:0000269" key="5">
    <source>
    </source>
</evidence>
<evidence type="ECO:0000269" key="6">
    <source>
    </source>
</evidence>
<evidence type="ECO:0000269" key="7">
    <source>
    </source>
</evidence>
<evidence type="ECO:0000269" key="8">
    <source>
    </source>
</evidence>
<evidence type="ECO:0000303" key="9">
    <source>
    </source>
</evidence>
<evidence type="ECO:0000303" key="10">
    <source>
    </source>
</evidence>
<evidence type="ECO:0000305" key="11"/>
<evidence type="ECO:0000305" key="12">
    <source>
    </source>
</evidence>
<evidence type="ECO:0000312" key="13">
    <source>
        <dbReference type="EMBL" id="AAG00600.1"/>
    </source>
</evidence>
<evidence type="ECO:0007744" key="14">
    <source>
        <dbReference type="PDB" id="4LNV"/>
    </source>
</evidence>
<comment type="function">
    <text evidence="1 5 8">Plays an essential role in the innate immune response to bacteria and protozoa infection (PubMed:11257225). After proteolytic cleavage, the protein C-terminus binds covalently through a thioester bond to the pathogen surface resulting in pathogen clearance either by melanization or lysis (PubMed:11257225). Initiate the recruitment and activation of a cascade of proteases, mostly of CLIP-domain serine proteases, which leads to the proteolytic cleavage of the prophenoloxidase (PPO) into active phenoloxidase (PO), the rate-limiting enzyme in melanin biosynthesis (By similarity). In response to parasite P.berghei-mediated infection, binds to and mediates killing of ookinetes, as they egress from midgut epithelial cells into the basal labyrinth, by both lysis and melanization (By similarity). During bacterial infection, binds to both Gram-positive and Gram-negative bacteria but only promotes phagocytosis of Gram-negative bacteria (PubMed:11257225). Promotes the accumulation of SPCLIP1 onto the surface of P.berghei ookinetes and bacterium E.coli which leads to the melanization of the pathogen (By similarity). Recruits CLIPA2 to bacteria surface (By similarity). In response to bacterial infection, required for periostial hemocyte aggregation, but not for the aggregation of sessile hemocytes in non-periostial regions (By similarity). During the late stage of fungus B.bassiana-mediated infection, required for the initiation of hyphae melanization by binding to the surface of hyphae and recruiting prophenoloxidase PPO to them (By similarity). Plays a role in male fertility by binding to defective sperm cells and promoting their removal during spermatogenesis (PubMed:26394016).</text>
</comment>
<comment type="function">
    <molecule>Thioester-containing protein 1 C-terminal</molecule>
    <text evidence="5">Binds covalently through a thioester bond to the pathogen surface resulting in pathogen clearance.</text>
</comment>
<comment type="subunit">
    <text evidence="1 7">Heterodimer of a TEP1-N chain and an TEP1-C chain non-covalently linked (By similarity). Forms a complex composed of TEP1-N and TEP1-C heterodimer, LRIM1 and APL1C; the interaction stabilizes TEP1-N and TEP1-C heterodimer, prevents its binding to tissues while circulating in the hemolymph and protects the thioester bond from hydrolysis (PubMed:23055931). Mature TEP1 and to a lesser extent full-length TEP1 interact with SPCLIP1; the interaction is induced by microbial infection (By similarity).</text>
</comment>
<comment type="subcellular location">
    <subcellularLocation>
        <location evidence="5">Secreted</location>
    </subcellularLocation>
    <text evidence="5">Secreted as a full-length protein into the hemolymph.</text>
</comment>
<comment type="tissue specificity">
    <text evidence="5">Specifically expressed in hemocytes (at protein level).</text>
</comment>
<comment type="developmental stage">
    <text evidence="5">Expressed in embryos, fourth instar larvae (L4), young white pupae, old tanned pupae and in blood fed and non-fed adult females (at protein level).</text>
</comment>
<comment type="induction">
    <text evidence="5">By bacterium E.coli infection.</text>
</comment>
<comment type="PTM">
    <text evidence="5 7">In the hemolymph, the full-length protein is cleaved by an unknow protease into a 75kDa N-terminal (TEP1-N) chain and an 80kDa C-terminal (TEP1-C) chain which remain non-covalently linked (PubMed:11257225, PubMed:23055931). The TEP1-C chain contains the thioester bond which covalently binds to the pathogen surface (PubMed:11257225). Cleavage is induced by bacterial infection or aseptic wound injury (PubMed:11257225). During embryonic and pupal development, the cleaved form is the predominant form (PubMed:11257225).</text>
</comment>
<comment type="PTM">
    <text evidence="5">N-glycosylated.</text>
</comment>
<comment type="polymorphism">
    <text evidence="6 7 8">TEP1 gene is highly polymorphic mainly in the region surrounding the thioester bond (PubMed:19797663, PubMed:23055931). Two main alleles have been described, TEP1*S and TEP1*R (PubMed:19797663). After proteolytic cleavage, TEP1*S alleles are more susceptible to hydrolysis of the intramolecular thioester bond than TEP1*R alleles (PubMed:23055931). In TEP1*S2 male mosquitos, removal of defective sperm is more efficient resulting in enhanced male fertility (PubMed:26394016).</text>
</comment>
<reference evidence="13" key="1">
    <citation type="journal article" date="2001" name="Cell">
        <title>Conserved role of a complement-like protein in phagocytosis revealed by dsRNA knockout in cultured cells of the mosquito, Anopheles gambiae.</title>
        <authorList>
            <person name="Levashina E.A."/>
            <person name="Moita L.F."/>
            <person name="Blandin S."/>
            <person name="Vriend G."/>
            <person name="Lagueux M."/>
            <person name="Kafatos F.C."/>
        </authorList>
    </citation>
    <scope>NUCLEOTIDE SEQUENCE [MRNA]</scope>
    <scope>FUNCTION</scope>
    <scope>SUBCELLULAR LOCATION</scope>
    <scope>TISSUE SPECIFICITY</scope>
    <scope>DEVELOPMENTAL STAGE</scope>
    <scope>INDUCTION</scope>
    <scope>PROTEOLYTIC CLEAVAGE</scope>
    <scope>GLYCOSYLATION</scope>
    <source>
        <strain evidence="13">Suakoko</strain>
    </source>
</reference>
<reference evidence="11" key="2">
    <citation type="journal article" date="2009" name="Science">
        <title>Dissecting the genetic basis of resistance to malaria parasites in Anopheles gambiae.</title>
        <authorList>
            <person name="Blandin S.A."/>
            <person name="Wang-Sattler R."/>
            <person name="Lamacchia M."/>
            <person name="Gagneur J."/>
            <person name="Lycett G."/>
            <person name="Ning Y."/>
            <person name="Levashina E.A."/>
            <person name="Steinmetz L.M."/>
        </authorList>
    </citation>
    <scope>NOMENCLATURE</scope>
    <scope>POLYMORPHISM</scope>
</reference>
<reference evidence="11" key="3">
    <citation type="journal article" date="2015" name="PLoS Biol.">
        <title>A New Role of the Mosquito Complement-like Cascade in Male Fertility in Anopheles gambiae.</title>
        <authorList>
            <person name="Pompon J."/>
            <person name="Levashina E.A."/>
        </authorList>
    </citation>
    <scope>FUNCTION</scope>
    <scope>POLYMORPHISM</scope>
</reference>
<reference evidence="14" key="4">
    <citation type="journal article" date="2012" name="PLoS Pathog.">
        <title>Molecular basis for genetic resistance of Anopheles gambiae to Plasmodium: structural analysis of TEP1 susceptible and resistant alleles.</title>
        <authorList>
            <person name="Le B.V."/>
            <person name="Williams M."/>
            <person name="Logarajah S."/>
            <person name="Baxter R.H."/>
        </authorList>
    </citation>
    <scope>X-RAY CRYSTALLOGRAPHY (3.70 ANGSTROMS) OF 22-1338</scope>
    <scope>IDENTIFICATION IN A COMPLEX WITH LRIM1 AND APL1C</scope>
    <scope>PROTEOLYTIC CLEAVAGE</scope>
    <scope>POLYMORPHISM</scope>
    <scope>GLYCOSYLATION AT ASN-68; ASN-242; ASN-312; ASN-481; ASN-637; ASN-728 AND ASN-813</scope>
    <scope>DISULFIDE BONDS</scope>
    <scope>THIOESTER BOND</scope>
</reference>
<dbReference type="EMBL" id="AF291654">
    <property type="protein sequence ID" value="AAG00600.1"/>
    <property type="molecule type" value="mRNA"/>
</dbReference>
<dbReference type="PDB" id="4LNV">
    <property type="method" value="X-ray"/>
    <property type="resolution" value="3.70 A"/>
    <property type="chains" value="A/B/C=22-1338"/>
</dbReference>
<dbReference type="PDBsum" id="4LNV"/>
<dbReference type="SMR" id="Q9GYW4"/>
<dbReference type="DIP" id="DIP-59386N"/>
<dbReference type="IntAct" id="Q9GYW4">
    <property type="interactions" value="2"/>
</dbReference>
<dbReference type="GlyCosmos" id="Q9GYW4">
    <property type="glycosylation" value="9 sites, No reported glycans"/>
</dbReference>
<dbReference type="iPTMnet" id="Q9GYW4"/>
<dbReference type="VEuPathDB" id="VectorBase:AGAMI1_007003"/>
<dbReference type="VEuPathDB" id="VectorBase:AGAP010815"/>
<dbReference type="HOGENOM" id="CLU_001634_5_3_1"/>
<dbReference type="EvolutionaryTrace" id="Q9GYW4"/>
<dbReference type="Proteomes" id="UP000007062">
    <property type="component" value="Unplaced"/>
</dbReference>
<dbReference type="GO" id="GO:0005615">
    <property type="term" value="C:extracellular space"/>
    <property type="evidence" value="ECO:0000314"/>
    <property type="project" value="UniProtKB"/>
</dbReference>
<dbReference type="GO" id="GO:0004866">
    <property type="term" value="F:endopeptidase inhibitor activity"/>
    <property type="evidence" value="ECO:0007669"/>
    <property type="project" value="InterPro"/>
</dbReference>
<dbReference type="GO" id="GO:0002376">
    <property type="term" value="P:immune system process"/>
    <property type="evidence" value="ECO:0007669"/>
    <property type="project" value="UniProtKB-KW"/>
</dbReference>
<dbReference type="GO" id="GO:1903028">
    <property type="term" value="P:positive regulation of opsonization"/>
    <property type="evidence" value="ECO:0000315"/>
    <property type="project" value="UniProtKB"/>
</dbReference>
<dbReference type="GO" id="GO:0060100">
    <property type="term" value="P:positive regulation of phagocytosis, engulfment"/>
    <property type="evidence" value="ECO:0000315"/>
    <property type="project" value="UniProtKB"/>
</dbReference>
<dbReference type="CDD" id="cd02897">
    <property type="entry name" value="A2M_2"/>
    <property type="match status" value="1"/>
</dbReference>
<dbReference type="FunFam" id="2.60.40.1930:FF:000001">
    <property type="entry name" value="CD109 isoform 3"/>
    <property type="match status" value="1"/>
</dbReference>
<dbReference type="Gene3D" id="1.50.10.20">
    <property type="match status" value="1"/>
</dbReference>
<dbReference type="Gene3D" id="2.20.130.20">
    <property type="match status" value="2"/>
</dbReference>
<dbReference type="Gene3D" id="2.60.120.1540">
    <property type="match status" value="1"/>
</dbReference>
<dbReference type="Gene3D" id="2.60.40.1930">
    <property type="match status" value="2"/>
</dbReference>
<dbReference type="Gene3D" id="2.60.40.1940">
    <property type="match status" value="1"/>
</dbReference>
<dbReference type="Gene3D" id="2.60.40.2950">
    <property type="match status" value="1"/>
</dbReference>
<dbReference type="Gene3D" id="2.60.40.690">
    <property type="entry name" value="Alpha-macroglobulin, receptor-binding domain"/>
    <property type="match status" value="1"/>
</dbReference>
<dbReference type="Gene3D" id="2.60.40.10">
    <property type="entry name" value="Immunoglobulins"/>
    <property type="match status" value="2"/>
</dbReference>
<dbReference type="InterPro" id="IPR009048">
    <property type="entry name" value="A-macroglobulin_rcpt-bd"/>
</dbReference>
<dbReference type="InterPro" id="IPR036595">
    <property type="entry name" value="A-macroglobulin_rcpt-bd_sf"/>
</dbReference>
<dbReference type="InterPro" id="IPR050473">
    <property type="entry name" value="A2M/Complement_sys"/>
</dbReference>
<dbReference type="InterPro" id="IPR011625">
    <property type="entry name" value="A2M_N_BRD"/>
</dbReference>
<dbReference type="InterPro" id="IPR041813">
    <property type="entry name" value="A2M_TED"/>
</dbReference>
<dbReference type="InterPro" id="IPR047565">
    <property type="entry name" value="Alpha-macroglob_thiol-ester_cl"/>
</dbReference>
<dbReference type="InterPro" id="IPR011626">
    <property type="entry name" value="Alpha-macroglobulin_TED"/>
</dbReference>
<dbReference type="InterPro" id="IPR013783">
    <property type="entry name" value="Ig-like_fold"/>
</dbReference>
<dbReference type="InterPro" id="IPR001599">
    <property type="entry name" value="Macroglobln_a2"/>
</dbReference>
<dbReference type="InterPro" id="IPR019742">
    <property type="entry name" value="MacrogloblnA2_CS"/>
</dbReference>
<dbReference type="InterPro" id="IPR002890">
    <property type="entry name" value="MG2"/>
</dbReference>
<dbReference type="InterPro" id="IPR041555">
    <property type="entry name" value="MG3"/>
</dbReference>
<dbReference type="InterPro" id="IPR040839">
    <property type="entry name" value="MG4"/>
</dbReference>
<dbReference type="InterPro" id="IPR049135">
    <property type="entry name" value="TEP1_CUB2"/>
</dbReference>
<dbReference type="InterPro" id="IPR008930">
    <property type="entry name" value="Terpenoid_cyclase/PrenylTrfase"/>
</dbReference>
<dbReference type="PANTHER" id="PTHR11412:SF136">
    <property type="entry name" value="CD109 ANTIGEN"/>
    <property type="match status" value="1"/>
</dbReference>
<dbReference type="PANTHER" id="PTHR11412">
    <property type="entry name" value="MACROGLOBULIN / COMPLEMENT"/>
    <property type="match status" value="1"/>
</dbReference>
<dbReference type="Pfam" id="PF00207">
    <property type="entry name" value="A2M"/>
    <property type="match status" value="1"/>
</dbReference>
<dbReference type="Pfam" id="PF07703">
    <property type="entry name" value="A2M_BRD"/>
    <property type="match status" value="1"/>
</dbReference>
<dbReference type="Pfam" id="PF07677">
    <property type="entry name" value="A2M_recep"/>
    <property type="match status" value="1"/>
</dbReference>
<dbReference type="Pfam" id="PF01835">
    <property type="entry name" value="MG2"/>
    <property type="match status" value="1"/>
</dbReference>
<dbReference type="Pfam" id="PF17791">
    <property type="entry name" value="MG3"/>
    <property type="match status" value="1"/>
</dbReference>
<dbReference type="Pfam" id="PF17789">
    <property type="entry name" value="MG4"/>
    <property type="match status" value="1"/>
</dbReference>
<dbReference type="Pfam" id="PF07678">
    <property type="entry name" value="TED_complement"/>
    <property type="match status" value="1"/>
</dbReference>
<dbReference type="Pfam" id="PF21412">
    <property type="entry name" value="TEP1_CUB2"/>
    <property type="match status" value="1"/>
</dbReference>
<dbReference type="SFLD" id="SFLDG01179">
    <property type="entry name" value="Complement_C3/C4_Like"/>
    <property type="match status" value="1"/>
</dbReference>
<dbReference type="SMART" id="SM01360">
    <property type="entry name" value="A2M"/>
    <property type="match status" value="1"/>
</dbReference>
<dbReference type="SMART" id="SM01359">
    <property type="entry name" value="A2M_N_2"/>
    <property type="match status" value="1"/>
</dbReference>
<dbReference type="SMART" id="SM01361">
    <property type="entry name" value="A2M_recep"/>
    <property type="match status" value="1"/>
</dbReference>
<dbReference type="SMART" id="SM01419">
    <property type="entry name" value="Thiol-ester_cl"/>
    <property type="match status" value="1"/>
</dbReference>
<dbReference type="SUPFAM" id="SSF49410">
    <property type="entry name" value="Alpha-macroglobulin receptor domain"/>
    <property type="match status" value="1"/>
</dbReference>
<dbReference type="SUPFAM" id="SSF48239">
    <property type="entry name" value="Terpenoid cyclases/Protein prenyltransferases"/>
    <property type="match status" value="1"/>
</dbReference>
<dbReference type="PROSITE" id="PS00477">
    <property type="entry name" value="ALPHA_2_MACROGLOBULIN"/>
    <property type="match status" value="1"/>
</dbReference>
<feature type="signal peptide" evidence="3">
    <location>
        <begin position="1"/>
        <end position="21"/>
    </location>
</feature>
<feature type="chain" id="PRO_0000455722" description="Thioester-containing protein 1 allele S1" evidence="3">
    <location>
        <begin position="22"/>
        <end position="1340"/>
    </location>
</feature>
<feature type="chain" id="PRO_0000455723" description="Thioester-containing protein 1 N-terminal" evidence="12">
    <location>
        <begin position="22"/>
        <end status="unknown"/>
    </location>
</feature>
<feature type="chain" id="PRO_0000455724" description="Thioester-containing protein 1 C-terminal" evidence="12">
    <location>
        <begin status="unknown"/>
        <end position="1340"/>
    </location>
</feature>
<feature type="region of interest" description="May contain the cleavage site" evidence="2">
    <location>
        <begin position="580"/>
        <end position="609"/>
    </location>
</feature>
<feature type="glycosylation site" description="N-linked (GlcNAc...) asparagine" evidence="7 14">
    <location>
        <position position="68"/>
    </location>
</feature>
<feature type="glycosylation site" description="N-linked (GlcNAc...) asparagine" evidence="4">
    <location>
        <position position="199"/>
    </location>
</feature>
<feature type="glycosylation site" description="N-linked (GlcNAc...) asparagine" evidence="7 14">
    <location>
        <position position="242"/>
    </location>
</feature>
<feature type="glycosylation site" description="N-linked (GlcNAc...) asparagine" evidence="7 14">
    <location>
        <position position="312"/>
    </location>
</feature>
<feature type="glycosylation site" description="N-linked (GlcNAc...) asparagine" evidence="7 14">
    <location>
        <position position="481"/>
    </location>
</feature>
<feature type="glycosylation site" description="N-linked (GlcNAc...) asparagine" evidence="7 14">
    <location>
        <position position="637"/>
    </location>
</feature>
<feature type="glycosylation site" description="N-linked (GlcNAc...) asparagine" evidence="7 14">
    <location>
        <position position="728"/>
    </location>
</feature>
<feature type="glycosylation site" description="N-linked (GlcNAc...) asparagine" evidence="7 14">
    <location>
        <position position="813"/>
    </location>
</feature>
<feature type="glycosylation site" description="N-linked (GlcNAc...) asparagine" evidence="4">
    <location>
        <position position="828"/>
    </location>
</feature>
<feature type="disulfide bond" evidence="7 14">
    <location>
        <begin position="1217"/>
        <end position="1283"/>
    </location>
</feature>
<feature type="disulfide bond" evidence="7 14">
    <location>
        <begin position="1326"/>
        <end position="1338"/>
    </location>
</feature>
<feature type="disulfide bond" evidence="7 14">
    <location>
        <begin position="1329"/>
        <end position="1334"/>
    </location>
</feature>
<feature type="cross-link" description="Isoglutamyl cysteine thioester (Cys-Gln)" evidence="7">
    <location>
        <begin position="859"/>
        <end position="862"/>
    </location>
</feature>
<proteinExistence type="evidence at protein level"/>
<keyword id="KW-0002">3D-structure</keyword>
<keyword id="KW-1015">Disulfide bond</keyword>
<keyword id="KW-0325">Glycoprotein</keyword>
<keyword id="KW-0391">Immunity</keyword>
<keyword id="KW-1185">Reference proteome</keyword>
<keyword id="KW-0964">Secreted</keyword>
<keyword id="KW-0732">Signal</keyword>
<keyword id="KW-0882">Thioester bond</keyword>
<organism evidence="13">
    <name type="scientific">Anopheles gambiae</name>
    <name type="common">African malaria mosquito</name>
    <dbReference type="NCBI Taxonomy" id="7165"/>
    <lineage>
        <taxon>Eukaryota</taxon>
        <taxon>Metazoa</taxon>
        <taxon>Ecdysozoa</taxon>
        <taxon>Arthropoda</taxon>
        <taxon>Hexapoda</taxon>
        <taxon>Insecta</taxon>
        <taxon>Pterygota</taxon>
        <taxon>Neoptera</taxon>
        <taxon>Endopterygota</taxon>
        <taxon>Diptera</taxon>
        <taxon>Nematocera</taxon>
        <taxon>Culicoidea</taxon>
        <taxon>Culicidae</taxon>
        <taxon>Anophelinae</taxon>
        <taxon>Anopheles</taxon>
    </lineage>
</organism>
<sequence>MWQFIRSRILTVIIFIGAAHGLLVVGPKFIRANQEYTLVISNFNSQLSKVDLLLKLEGETDNGLSVLNVTKMVDVRRNMNRMINFNMPEELTAGNYKITIDGQRGFSFHKEAELVYLSKSISGLIQVDKPVFKPGDTVNFRVILLDTELKPPARVKSVYVTIRDPQRNVIRKWSTAKLYAGVFESDLQIVPTPMLGVWNISVEVEGEELVSKTFEVKEYVLSTFDVQVMPSVIPLEEHQAVNLTIEANYHFGKPVQGVAKVELYLDDDKLNQKKELTVYGKGQVELRFDNFAMDADQQDVRVKVSFIEQYTNRTVVKQSQITVYRYAYRVELIKESPQFRPGLPFKCALQFTHHDGTPAKGITGKVEVSDVGFETTTTSDNDGLIKLELQPSEGTEQLGINFNAVDGFFFYEDVNKVETVTDAYIKLELKSPIKRNKLMRFMVTCTERMTFFVYYVMSKGNIIDAGFMRPNKQTKYLLQLNATEKMIPKAKILIATVAGRTVVYDYADLDFQELRNNFDLSIDEQEIKPGRQIELSMSGRPGAYVGLAAYDKALLLFNKNHDLFWEDIGQVFDGFHAINENEFDIFHSLGLFARTLDDILFDSANEKTGRNALQSGKPIGKLVSYRTNFQESWLWKNVSIGRSGSRKLIEVVPDTTTSWYLTGFSIDPVYGLGIIKKPIQFTTVQPFYIVENLPYSIKRGEAVVLQFTLFNNLGAEYIADVTLYNVANQTEFVGRPDTDLSYTKSVSVPPKVGVPISFLIKARKLGEMAVRVKASIMLGHETDALEKVIRVMPESLAQPKMDTSFFCFDDYKNQTFPFNLDINKKADNGSKKIEFRLNPNLLTMVIKNLDNLLAVPTGCGEQNMVKFVPNILVLDYLYATGSKEQHLIDKATNLLRQGYQNQMRYRQTDGSFGVWEKSGSSVFLTAFVATSMQTASKYMNDIDAAMVEKALDWLASKQHSSGRFDETGKVWHKDMQGGLRNGVALTSYVLTALLENDIAKVKHAVVIQNGMNYLSNQLAFINNPYDLSIATYAMMLNGHTMKKEALDKLIDMSISDNNKKERYWGTTNQIETTAYALLSFVMAEKYLDGIPVMNWLVNQRYVTGSFPRTQDTFVGLKALTKLAEKISPSRNDYTVQLKYKKNTKYFNINSEQIDVQNFLEIPEDTKKLEINVGGIGFGLLEVIYQFDLNLVNFEHRFKLDLEKQNTGSDYELRLRVCANYIPELTDSQSNMALIEVTLPSGYVVDRNPISEQTTVNPIQNMEIRYGGTSVVLYYYKMGTERNCFTVTAYRRFKVALKRPAYVVVYDYYNTNLNAIKVYEVDKQNVCEICEEEDCPAECKK</sequence>
<gene>
    <name evidence="10" type="primary">TEP1</name>
    <name evidence="9" type="synonym">TEP-I</name>
</gene>